<reference key="1">
    <citation type="submission" date="2004-11" db="EMBL/GenBank/DDBJ databases">
        <authorList>
            <consortium name="The German cDNA consortium"/>
        </authorList>
    </citation>
    <scope>NUCLEOTIDE SEQUENCE [LARGE SCALE MRNA]</scope>
    <source>
        <tissue>Brain cortex</tissue>
    </source>
</reference>
<name>RNPS1_PONAB</name>
<keyword id="KW-0007">Acetylation</keyword>
<keyword id="KW-0963">Cytoplasm</keyword>
<keyword id="KW-1017">Isopeptide bond</keyword>
<keyword id="KW-0507">mRNA processing</keyword>
<keyword id="KW-0508">mRNA splicing</keyword>
<keyword id="KW-0866">Nonsense-mediated mRNA decay</keyword>
<keyword id="KW-0539">Nucleus</keyword>
<keyword id="KW-0597">Phosphoprotein</keyword>
<keyword id="KW-1185">Reference proteome</keyword>
<keyword id="KW-0694">RNA-binding</keyword>
<keyword id="KW-0832">Ubl conjugation</keyword>
<proteinExistence type="evidence at transcript level"/>
<gene>
    <name type="primary">RNPS1</name>
</gene>
<protein>
    <recommendedName>
        <fullName>RNA-binding protein with serine-rich domain 1</fullName>
    </recommendedName>
</protein>
<organism>
    <name type="scientific">Pongo abelii</name>
    <name type="common">Sumatran orangutan</name>
    <name type="synonym">Pongo pygmaeus abelii</name>
    <dbReference type="NCBI Taxonomy" id="9601"/>
    <lineage>
        <taxon>Eukaryota</taxon>
        <taxon>Metazoa</taxon>
        <taxon>Chordata</taxon>
        <taxon>Craniata</taxon>
        <taxon>Vertebrata</taxon>
        <taxon>Euteleostomi</taxon>
        <taxon>Mammalia</taxon>
        <taxon>Eutheria</taxon>
        <taxon>Euarchontoglires</taxon>
        <taxon>Primates</taxon>
        <taxon>Haplorrhini</taxon>
        <taxon>Catarrhini</taxon>
        <taxon>Hominidae</taxon>
        <taxon>Pongo</taxon>
    </lineage>
</organism>
<comment type="function">
    <text evidence="1">Part of pre- and post-splicing multiprotein mRNP complexes. Auxiliary component of the splicing-dependent multiprotein exon junction complex (EJC) deposited at splice junction on mRNAs. The EJC is a dynamic structure consisting of core proteins and several peripheral nuclear and cytoplasmic associated factors that join the complex only transiently either during EJC assembly or during subsequent mRNA metabolism. Component of the ASAP and PSAP complexes which bind RNA in a sequence-independent manner and are proposed to be recruited to the EJC prior to or during the splicing process and to regulate specific excision of introns in specific transcription subsets. The ASAP complex can inhibit RNA processing during in vitro splicing reactions. The ASAP complex promotes apoptosis and is disassembled after induction of apoptosis. Enhances the formation of the ATP-dependent A complex of the spliceosome. Involved in both constitutive splicing and, in association with SRP54 and TRA2B/SFRS10, in distinctive modulation of alternative splicing in a substrate-dependent manner. Involved in the splicing modulation of BCL2L1/Bcl-X (and probably other apoptotic genes); specifically inhibits formation of proapoptotic isoforms such as Bcl-X(S); the activity is different from the established EJC assembly and function. Participates in mRNA 3'-end cleavage. Involved in UPF2-dependent nonsense-mediated decay (NMD) of mRNAs containing premature stop codons. Also mediates increase of mRNA abundance and translational efficiency. Binds spliced mRNA 20-25 nt upstream of exon-exon junctions (By similarity).</text>
</comment>
<comment type="subunit">
    <text evidence="1">Found in mRNA splicing-dependent exon junction complexes (EJC). Found in a post-splicing complex with NXF1, RBM8A, UPF1, UPF2, UPF3A, UPF3B and RNPS1. Component of the heterotrimeric ASAP (apoptosis- and splicing-associated protein) and PSAP complexes consisting of RNPS1, SAP18 and either ACIN1 or PNN, respectively; the ASAP and PSAP complexes probably are formed mutually exclusive. Component of the active spliceosome. Associates with polysomes. Interacts with the cleaved p110 isoform of CDC2L1, CSNK2A1, PNN, SART3, SRP54, SRRM1 and TRA2B/SFRS10 (By similarity).</text>
</comment>
<comment type="subcellular location">
    <subcellularLocation>
        <location evidence="1">Nucleus</location>
    </subcellularLocation>
    <subcellularLocation>
        <location evidence="1">Nucleus speckle</location>
    </subcellularLocation>
    <subcellularLocation>
        <location evidence="1">Cytoplasm</location>
    </subcellularLocation>
    <text evidence="1">Nucleocytoplasmic shuttling protein. Colocalizes with the core EJC, ALYREF/THOC4, NXF1 and UAP56 in the nucleus and nuclear speckles (By similarity).</text>
</comment>
<comment type="domain">
    <text evidence="1">The RRM domain is required for the formation of the ASAP complex.</text>
</comment>
<comment type="PTM">
    <text evidence="1">Phosphorylated on one or more of the four Ser/Thr residues (Ser-43, Thr-49, Ser-52 or Ser-53). Ser-53 phosphorylation site is important for splicing and translation stimulation activity in vitro (By similarity).</text>
</comment>
<comment type="similarity">
    <text evidence="5">Belongs to the splicing factor SR family.</text>
</comment>
<feature type="chain" id="PRO_0000081819" description="RNA-binding protein with serine-rich domain 1">
    <location>
        <begin position="1"/>
        <end position="305"/>
    </location>
</feature>
<feature type="domain" description="RRM" evidence="3">
    <location>
        <begin position="161"/>
        <end position="240"/>
    </location>
</feature>
<feature type="region of interest" description="Necessary for interaction with the cleaved p110 isoform of CDC2L1" evidence="1">
    <location>
        <begin position="1"/>
        <end position="220"/>
    </location>
</feature>
<feature type="region of interest" description="Disordered" evidence="4">
    <location>
        <begin position="1"/>
        <end position="170"/>
    </location>
</feature>
<feature type="region of interest" description="Necessary for interaction with SRP54, nuclear localization and exon-skipping" evidence="1">
    <location>
        <begin position="1"/>
        <end position="161"/>
    </location>
</feature>
<feature type="region of interest" description="Necessary for interactions with UPF2 and UPF3B and UPF2-dependent NMD" evidence="1">
    <location>
        <begin position="69"/>
        <end position="121"/>
    </location>
</feature>
<feature type="region of interest" description="Necessary for interaction with PNN and exon-skipping" evidence="1">
    <location>
        <begin position="156"/>
        <end position="242"/>
    </location>
</feature>
<feature type="region of interest" description="Interaction with SAP18 and ACIN1" evidence="1">
    <location>
        <begin position="159"/>
        <end position="244"/>
    </location>
</feature>
<feature type="region of interest" description="Necessary for interaction with TRA2B, nuclear localization and exon-skipping" evidence="1">
    <location>
        <begin position="238"/>
        <end position="305"/>
    </location>
</feature>
<feature type="region of interest" description="Disordered" evidence="4">
    <location>
        <begin position="240"/>
        <end position="305"/>
    </location>
</feature>
<feature type="compositionally biased region" description="Basic residues" evidence="4">
    <location>
        <begin position="1"/>
        <end position="10"/>
    </location>
</feature>
<feature type="compositionally biased region" description="Basic and acidic residues" evidence="4">
    <location>
        <begin position="33"/>
        <end position="59"/>
    </location>
</feature>
<feature type="compositionally biased region" description="Low complexity" evidence="4">
    <location>
        <begin position="68"/>
        <end position="126"/>
    </location>
</feature>
<feature type="compositionally biased region" description="Basic residues" evidence="4">
    <location>
        <begin position="127"/>
        <end position="143"/>
    </location>
</feature>
<feature type="compositionally biased region" description="Basic residues" evidence="4">
    <location>
        <begin position="151"/>
        <end position="167"/>
    </location>
</feature>
<feature type="compositionally biased region" description="Pro residues" evidence="4">
    <location>
        <begin position="242"/>
        <end position="262"/>
    </location>
</feature>
<feature type="compositionally biased region" description="Basic residues" evidence="4">
    <location>
        <begin position="266"/>
        <end position="298"/>
    </location>
</feature>
<feature type="modified residue" description="Phosphoserine" evidence="2">
    <location>
        <position position="53"/>
    </location>
</feature>
<feature type="modified residue" description="Phosphoserine" evidence="2">
    <location>
        <position position="155"/>
    </location>
</feature>
<feature type="modified residue" description="Phosphoserine" evidence="2">
    <location>
        <position position="157"/>
    </location>
</feature>
<feature type="modified residue" description="Phosphothreonine" evidence="2">
    <location>
        <position position="161"/>
    </location>
</feature>
<feature type="modified residue" description="N6-acetyllysine" evidence="2">
    <location>
        <position position="218"/>
    </location>
</feature>
<feature type="cross-link" description="Glycyl lysine isopeptide (Lys-Gly) (interchain with G-Cter in SUMO2)" evidence="2">
    <location>
        <position position="7"/>
    </location>
</feature>
<feature type="cross-link" description="Glycyl lysine isopeptide (Lys-Gly) (interchain with G-Cter in SUMO2)" evidence="2">
    <location>
        <position position="15"/>
    </location>
</feature>
<sequence length="305" mass="34208">MDLSGVKKKSLLGVKENNKKSSTRAPSPTKRKDRSDEKSKDRSKDKGATKESSEKDRGRDKTRKRRSASSGSSSTRSRSSSTSSSGSSTSTGSSSGSSSSSASSRSGSSSTSRSSSSSSSSGSPSPSRRRHDNRRRSRSKSKPPKRDEKERKRRSPSPKPTKVHIGRLTRNVTKDHIMEIFSTYGKIKMIDMPVERMHPHLSKGYAYVEFENPDEAEKALKHMDGGQIDGQEITATAVLAPWPRPPPRRFSPPRRMLPPPPMWRRSPPRMRRRSRSPRRRSPVRRRSRSPGRRRHRSRSSSNSSR</sequence>
<accession>Q5NVM8</accession>
<dbReference type="EMBL" id="CR925992">
    <property type="protein sequence ID" value="CAI29635.1"/>
    <property type="molecule type" value="mRNA"/>
</dbReference>
<dbReference type="RefSeq" id="NP_001127682.1">
    <property type="nucleotide sequence ID" value="NM_001134210.1"/>
</dbReference>
<dbReference type="RefSeq" id="XP_024088858.1">
    <property type="nucleotide sequence ID" value="XM_024233090.3"/>
</dbReference>
<dbReference type="RefSeq" id="XP_024088859.1">
    <property type="nucleotide sequence ID" value="XM_024233091.3"/>
</dbReference>
<dbReference type="RefSeq" id="XP_054389181.1">
    <property type="nucleotide sequence ID" value="XM_054533206.2"/>
</dbReference>
<dbReference type="SMR" id="Q5NVM8"/>
<dbReference type="FunCoup" id="Q5NVM8">
    <property type="interactions" value="3516"/>
</dbReference>
<dbReference type="Ensembl" id="ENSPPYT00000038186.1">
    <property type="protein sequence ID" value="ENSPPYP00000029940.1"/>
    <property type="gene ID" value="ENSPPYG00000035444.1"/>
</dbReference>
<dbReference type="GeneID" id="100174764"/>
<dbReference type="KEGG" id="pon:100174764"/>
<dbReference type="CTD" id="10921"/>
<dbReference type="GeneTree" id="ENSGT00730000111029"/>
<dbReference type="InParanoid" id="Q5NVM8"/>
<dbReference type="OMA" id="EFPVDRY"/>
<dbReference type="OrthoDB" id="252020at2759"/>
<dbReference type="Proteomes" id="UP000001595">
    <property type="component" value="Chromosome 16"/>
</dbReference>
<dbReference type="GO" id="GO:0061574">
    <property type="term" value="C:ASAP complex"/>
    <property type="evidence" value="ECO:0000250"/>
    <property type="project" value="UniProtKB"/>
</dbReference>
<dbReference type="GO" id="GO:0005737">
    <property type="term" value="C:cytoplasm"/>
    <property type="evidence" value="ECO:0007669"/>
    <property type="project" value="UniProtKB-SubCell"/>
</dbReference>
<dbReference type="GO" id="GO:0016607">
    <property type="term" value="C:nuclear speck"/>
    <property type="evidence" value="ECO:0007669"/>
    <property type="project" value="UniProtKB-SubCell"/>
</dbReference>
<dbReference type="GO" id="GO:0003730">
    <property type="term" value="F:mRNA 3'-UTR binding"/>
    <property type="evidence" value="ECO:0007669"/>
    <property type="project" value="Ensembl"/>
</dbReference>
<dbReference type="GO" id="GO:0000398">
    <property type="term" value="P:mRNA splicing, via spliceosome"/>
    <property type="evidence" value="ECO:0007669"/>
    <property type="project" value="TreeGrafter"/>
</dbReference>
<dbReference type="GO" id="GO:0048025">
    <property type="term" value="P:negative regulation of mRNA splicing, via spliceosome"/>
    <property type="evidence" value="ECO:0000250"/>
    <property type="project" value="UniProtKB"/>
</dbReference>
<dbReference type="GO" id="GO:0000184">
    <property type="term" value="P:nuclear-transcribed mRNA catabolic process, nonsense-mediated decay"/>
    <property type="evidence" value="ECO:0007669"/>
    <property type="project" value="UniProtKB-KW"/>
</dbReference>
<dbReference type="GO" id="GO:0043065">
    <property type="term" value="P:positive regulation of apoptotic process"/>
    <property type="evidence" value="ECO:0000250"/>
    <property type="project" value="UniProtKB"/>
</dbReference>
<dbReference type="GO" id="GO:0000381">
    <property type="term" value="P:regulation of alternative mRNA splicing, via spliceosome"/>
    <property type="evidence" value="ECO:0000250"/>
    <property type="project" value="UniProtKB"/>
</dbReference>
<dbReference type="CDD" id="cd12365">
    <property type="entry name" value="RRM_RNPS1"/>
    <property type="match status" value="1"/>
</dbReference>
<dbReference type="Gene3D" id="3.30.70.330">
    <property type="match status" value="1"/>
</dbReference>
<dbReference type="InterPro" id="IPR012677">
    <property type="entry name" value="Nucleotide-bd_a/b_plait_sf"/>
</dbReference>
<dbReference type="InterPro" id="IPR035979">
    <property type="entry name" value="RBD_domain_sf"/>
</dbReference>
<dbReference type="InterPro" id="IPR034201">
    <property type="entry name" value="RNPS1_RRM"/>
</dbReference>
<dbReference type="InterPro" id="IPR000504">
    <property type="entry name" value="RRM_dom"/>
</dbReference>
<dbReference type="PANTHER" id="PTHR15481">
    <property type="entry name" value="RIBONUCLEIC ACID BINDING PROTEIN S1"/>
    <property type="match status" value="1"/>
</dbReference>
<dbReference type="PANTHER" id="PTHR15481:SF2">
    <property type="entry name" value="RNA-BINDING PROTEIN WITH SERINE-RICH DOMAIN 1"/>
    <property type="match status" value="1"/>
</dbReference>
<dbReference type="Pfam" id="PF00076">
    <property type="entry name" value="RRM_1"/>
    <property type="match status" value="1"/>
</dbReference>
<dbReference type="SMART" id="SM00360">
    <property type="entry name" value="RRM"/>
    <property type="match status" value="1"/>
</dbReference>
<dbReference type="SUPFAM" id="SSF54928">
    <property type="entry name" value="RNA-binding domain, RBD"/>
    <property type="match status" value="1"/>
</dbReference>
<dbReference type="PROSITE" id="PS50102">
    <property type="entry name" value="RRM"/>
    <property type="match status" value="1"/>
</dbReference>
<evidence type="ECO:0000250" key="1"/>
<evidence type="ECO:0000250" key="2">
    <source>
        <dbReference type="UniProtKB" id="Q15287"/>
    </source>
</evidence>
<evidence type="ECO:0000255" key="3">
    <source>
        <dbReference type="PROSITE-ProRule" id="PRU00176"/>
    </source>
</evidence>
<evidence type="ECO:0000256" key="4">
    <source>
        <dbReference type="SAM" id="MobiDB-lite"/>
    </source>
</evidence>
<evidence type="ECO:0000305" key="5"/>